<reference key="1">
    <citation type="journal article" date="2006" name="Science">
        <title>Large-scale sequence analysis of avian influenza isolates.</title>
        <authorList>
            <person name="Obenauer J.C."/>
            <person name="Denson J."/>
            <person name="Mehta P.K."/>
            <person name="Su X."/>
            <person name="Mukatira S."/>
            <person name="Finkelstein D.B."/>
            <person name="Xu X."/>
            <person name="Wang J."/>
            <person name="Ma J."/>
            <person name="Fan Y."/>
            <person name="Rakestraw K.M."/>
            <person name="Webster R.G."/>
            <person name="Hoffmann E."/>
            <person name="Krauss S."/>
            <person name="Zheng J."/>
            <person name="Zhang Z."/>
            <person name="Naeve C.W."/>
        </authorList>
    </citation>
    <scope>NUCLEOTIDE SEQUENCE [GENOMIC RNA]</scope>
</reference>
<evidence type="ECO:0000250" key="1">
    <source>
        <dbReference type="UniProtKB" id="P03433"/>
    </source>
</evidence>
<evidence type="ECO:0000255" key="2">
    <source>
        <dbReference type="HAMAP-Rule" id="MF_04063"/>
    </source>
</evidence>
<sequence>MEDFVRQCFNPMIIELAEKAMKEYGEDPKIETNKFAAICTHLEVCFMYSDFHFIDERGESIIVESGDPNALLKHRFEIIEGRDRTMAWTVVNSICNTTGVEKPKFLPDLYDYKENRFIEIGVTRREVHIYYLEKANKIKSEKTHIHIFSFTGEEMATKADYTLDEESRARVKTRLFTIRQEMASRGLWDSFRQSERGEETIEERFEIRGTMRRLADQSLPPNFSSLENFRAYVDGFEPNGCIEGKLSQMSKEVNARIEPFLKTTPRPLRLPDGPPCSQRSKFLLMDALKLSIEDPSHEGEGIPLYDAIKCMKTFFGWKEPNIVKPHEKGINPNYLLAWKQVLAELQDIENEEKIPKTKNMKKTSQLKWALGENMAPEKVDFEDCKDVSDLKQYDSDEPEPRSLASWIQSEFNKACELTDSSWIELDEIGEDVAPIEHIASMRRNYFTAEVSHCRATEYIMKGVYINTALLNASCAAMDDFQLIPMISKCRTKEGRRKTNLYGFIVKGRSHLRNDTDVVNFVSMEFSLTDPRLEPHKWEKYCVLEIGDMLLRTAIGQVSRPMFLYVRTNGTSKIKMKWGMEMRRCLLQSLQQIESMIEAESSVKEKDMTKEFFENKSEKWPIGESPKGVEEGSIGKVCRTLLAKSVFNSLYASPQLEGFSAESRKLLLIVQALRDNLEPGTFDLGGLYEAIEECLINDPWVLLNASWFNSFLTHALK</sequence>
<accession>Q20P15</accession>
<protein>
    <recommendedName>
        <fullName evidence="2">Polymerase acidic protein</fullName>
        <ecNumber evidence="2">3.1.-.-</ecNumber>
    </recommendedName>
    <alternativeName>
        <fullName evidence="2">RNA-directed RNA polymerase subunit P2</fullName>
    </alternativeName>
</protein>
<comment type="function">
    <text evidence="2">Plays an essential role in viral RNA transcription and replication by forming the heterotrimeric polymerase complex together with PB1 and PB2 subunits. The complex transcribes viral mRNAs by using a unique mechanism called cap-snatching. It consists in the hijacking and cleavage of host capped pre-mRNAs. These short capped RNAs are then used as primers for viral mRNAs. The PB2 subunit is responsible for the binding of the 5' cap of cellular pre-mRNAs which are subsequently cleaved after 10-13 nucleotides by the PA subunit that carries the endonuclease activity.</text>
</comment>
<comment type="cofactor">
    <cofactor evidence="2">
        <name>Mn(2+)</name>
        <dbReference type="ChEBI" id="CHEBI:29035"/>
    </cofactor>
    <text evidence="2">Binds 2 manganese ions per subunit.</text>
</comment>
<comment type="subunit">
    <text evidence="1 2">Influenza RNA polymerase is composed of three subunits: PB1, PB2 and PA. Interacts (via C-terminus) with PB1 (via N-terminus).</text>
</comment>
<comment type="subcellular location">
    <subcellularLocation>
        <location evidence="2">Host cytoplasm</location>
    </subcellularLocation>
    <subcellularLocation>
        <location evidence="2">Host nucleus</location>
    </subcellularLocation>
    <text evidence="1 2">PB1 and PA are transported in the host nucleus as a complex.</text>
</comment>
<comment type="alternative products">
    <event type="ribosomal frameshifting"/>
    <isoform>
        <id>Q20P15-1</id>
        <name>PA</name>
        <sequence type="displayed"/>
    </isoform>
    <isoform>
        <id>P0CK80-1</id>
        <name>PA-X</name>
        <sequence type="external"/>
    </isoform>
</comment>
<comment type="PTM">
    <text evidence="1 2">Phosphorylated on serines and threonines by host kinases, including human casein kinase II.</text>
</comment>
<comment type="similarity">
    <text evidence="2">Belongs to the influenza viruses PA family.</text>
</comment>
<name>PA_I56A1</name>
<organismHost>
    <name type="scientific">Aves</name>
    <dbReference type="NCBI Taxonomy" id="8782"/>
</organismHost>
<organismHost>
    <name type="scientific">Sus scrofa</name>
    <name type="common">Pig</name>
    <dbReference type="NCBI Taxonomy" id="9823"/>
</organismHost>
<gene>
    <name evidence="2" type="primary">PA</name>
</gene>
<dbReference type="EC" id="3.1.-.-" evidence="2"/>
<dbReference type="EMBL" id="CY005820">
    <property type="protein sequence ID" value="ABB90227.1"/>
    <property type="molecule type" value="Genomic_RNA"/>
</dbReference>
<dbReference type="SMR" id="Q20P15"/>
<dbReference type="Proteomes" id="UP000008434">
    <property type="component" value="Genome"/>
</dbReference>
<dbReference type="Proteomes" id="UP000108613">
    <property type="component" value="Genome"/>
</dbReference>
<dbReference type="GO" id="GO:0030430">
    <property type="term" value="C:host cell cytoplasm"/>
    <property type="evidence" value="ECO:0007669"/>
    <property type="project" value="UniProtKB-SubCell"/>
</dbReference>
<dbReference type="GO" id="GO:0042025">
    <property type="term" value="C:host cell nucleus"/>
    <property type="evidence" value="ECO:0007669"/>
    <property type="project" value="UniProtKB-SubCell"/>
</dbReference>
<dbReference type="GO" id="GO:0004519">
    <property type="term" value="F:endonuclease activity"/>
    <property type="evidence" value="ECO:0007669"/>
    <property type="project" value="UniProtKB-KW"/>
</dbReference>
<dbReference type="GO" id="GO:0046872">
    <property type="term" value="F:metal ion binding"/>
    <property type="evidence" value="ECO:0007669"/>
    <property type="project" value="UniProtKB-KW"/>
</dbReference>
<dbReference type="GO" id="GO:0003723">
    <property type="term" value="F:RNA binding"/>
    <property type="evidence" value="ECO:0007669"/>
    <property type="project" value="UniProtKB-UniRule"/>
</dbReference>
<dbReference type="GO" id="GO:0075526">
    <property type="term" value="P:cap snatching"/>
    <property type="evidence" value="ECO:0007669"/>
    <property type="project" value="UniProtKB-UniRule"/>
</dbReference>
<dbReference type="GO" id="GO:0006351">
    <property type="term" value="P:DNA-templated transcription"/>
    <property type="evidence" value="ECO:0007669"/>
    <property type="project" value="UniProtKB-UniRule"/>
</dbReference>
<dbReference type="GO" id="GO:0039657">
    <property type="term" value="P:symbiont-mediated suppression of host gene expression"/>
    <property type="evidence" value="ECO:0007669"/>
    <property type="project" value="UniProtKB-KW"/>
</dbReference>
<dbReference type="GO" id="GO:0039523">
    <property type="term" value="P:symbiont-mediated suppression of host mRNA transcription via inhibition of RNA polymerase II activity"/>
    <property type="evidence" value="ECO:0007669"/>
    <property type="project" value="UniProtKB-UniRule"/>
</dbReference>
<dbReference type="GO" id="GO:0039694">
    <property type="term" value="P:viral RNA genome replication"/>
    <property type="evidence" value="ECO:0007669"/>
    <property type="project" value="InterPro"/>
</dbReference>
<dbReference type="GO" id="GO:0075523">
    <property type="term" value="P:viral translational frameshifting"/>
    <property type="evidence" value="ECO:0007669"/>
    <property type="project" value="UniProtKB-KW"/>
</dbReference>
<dbReference type="FunFam" id="3.40.91.90:FF:000001">
    <property type="entry name" value="Polymerase acidic protein"/>
    <property type="match status" value="1"/>
</dbReference>
<dbReference type="Gene3D" id="3.40.91.90">
    <property type="entry name" value="Influenza RNA-dependent RNA polymerase subunit PA, endonuclease domain"/>
    <property type="match status" value="1"/>
</dbReference>
<dbReference type="HAMAP" id="MF_04063">
    <property type="entry name" value="INFV_PA"/>
    <property type="match status" value="1"/>
</dbReference>
<dbReference type="InterPro" id="IPR037534">
    <property type="entry name" value="INFV_PA"/>
</dbReference>
<dbReference type="InterPro" id="IPR001009">
    <property type="entry name" value="PA/PA-X"/>
</dbReference>
<dbReference type="InterPro" id="IPR038372">
    <property type="entry name" value="PA/PA-X_sf"/>
</dbReference>
<dbReference type="Pfam" id="PF00603">
    <property type="entry name" value="Flu_PA"/>
    <property type="match status" value="1"/>
</dbReference>
<feature type="chain" id="PRO_0000279242" description="Polymerase acidic protein">
    <location>
        <begin position="1"/>
        <end position="716"/>
    </location>
</feature>
<feature type="short sequence motif" description="Nuclear localization signal 1 (NLS1)" evidence="1 2">
    <location>
        <begin position="124"/>
        <end position="139"/>
    </location>
</feature>
<feature type="short sequence motif" description="Nuclear localization signal 2 (NLS2)" evidence="1 2">
    <location>
        <begin position="184"/>
        <end position="247"/>
    </location>
</feature>
<feature type="binding site" evidence="2">
    <location>
        <position position="41"/>
    </location>
    <ligand>
        <name>Mn(2+)</name>
        <dbReference type="ChEBI" id="CHEBI:29035"/>
        <label>1</label>
    </ligand>
</feature>
<feature type="binding site" evidence="2">
    <location>
        <position position="80"/>
    </location>
    <ligand>
        <name>Mn(2+)</name>
        <dbReference type="ChEBI" id="CHEBI:29035"/>
        <label>2</label>
    </ligand>
</feature>
<feature type="binding site" evidence="2">
    <location>
        <position position="108"/>
    </location>
    <ligand>
        <name>Mn(2+)</name>
        <dbReference type="ChEBI" id="CHEBI:29035"/>
        <label>1</label>
    </ligand>
</feature>
<feature type="binding site" evidence="2">
    <location>
        <position position="108"/>
    </location>
    <ligand>
        <name>Mn(2+)</name>
        <dbReference type="ChEBI" id="CHEBI:29035"/>
        <label>2</label>
    </ligand>
</feature>
<feature type="binding site" evidence="2">
    <location>
        <position position="119"/>
    </location>
    <ligand>
        <name>Mn(2+)</name>
        <dbReference type="ChEBI" id="CHEBI:29035"/>
        <label>1</label>
    </ligand>
</feature>
<feature type="binding site" evidence="2">
    <location>
        <position position="120"/>
    </location>
    <ligand>
        <name>Mn(2+)</name>
        <dbReference type="ChEBI" id="CHEBI:29035"/>
        <label>1</label>
    </ligand>
</feature>
<organism>
    <name type="scientific">Influenza A virus (strain A/Duck/Czechoslovakia/1956 H4N6)</name>
    <dbReference type="NCBI Taxonomy" id="385590"/>
    <lineage>
        <taxon>Viruses</taxon>
        <taxon>Riboviria</taxon>
        <taxon>Orthornavirae</taxon>
        <taxon>Negarnaviricota</taxon>
        <taxon>Polyploviricotina</taxon>
        <taxon>Insthoviricetes</taxon>
        <taxon>Articulavirales</taxon>
        <taxon>Orthomyxoviridae</taxon>
        <taxon>Alphainfluenzavirus</taxon>
        <taxon>Alphainfluenzavirus influenzae</taxon>
        <taxon>Influenza A virus</taxon>
    </lineage>
</organism>
<keyword id="KW-1157">Cap snatching</keyword>
<keyword id="KW-0255">Endonuclease</keyword>
<keyword id="KW-1262">Eukaryotic host gene expression shutoff by virus</keyword>
<keyword id="KW-1191">Eukaryotic host transcription shutoff by virus</keyword>
<keyword id="KW-1035">Host cytoplasm</keyword>
<keyword id="KW-1190">Host gene expression shutoff by virus</keyword>
<keyword id="KW-1048">Host nucleus</keyword>
<keyword id="KW-0945">Host-virus interaction</keyword>
<keyword id="KW-0378">Hydrolase</keyword>
<keyword id="KW-1104">Inhibition of host RNA polymerase II by virus</keyword>
<keyword id="KW-0464">Manganese</keyword>
<keyword id="KW-0479">Metal-binding</keyword>
<keyword id="KW-0540">Nuclease</keyword>
<keyword id="KW-0597">Phosphoprotein</keyword>
<keyword id="KW-0688">Ribosomal frameshifting</keyword>
<proteinExistence type="inferred from homology"/>